<name>RL14_HERA2</name>
<feature type="chain" id="PRO_1000144284" description="Large ribosomal subunit protein uL14">
    <location>
        <begin position="1"/>
        <end position="122"/>
    </location>
</feature>
<keyword id="KW-0687">Ribonucleoprotein</keyword>
<keyword id="KW-0689">Ribosomal protein</keyword>
<keyword id="KW-0694">RNA-binding</keyword>
<keyword id="KW-0699">rRNA-binding</keyword>
<accession>A9B421</accession>
<organism>
    <name type="scientific">Herpetosiphon aurantiacus (strain ATCC 23779 / DSM 785 / 114-95)</name>
    <dbReference type="NCBI Taxonomy" id="316274"/>
    <lineage>
        <taxon>Bacteria</taxon>
        <taxon>Bacillati</taxon>
        <taxon>Chloroflexota</taxon>
        <taxon>Chloroflexia</taxon>
        <taxon>Herpetosiphonales</taxon>
        <taxon>Herpetosiphonaceae</taxon>
        <taxon>Herpetosiphon</taxon>
    </lineage>
</organism>
<sequence>MIQQESRMRVADNTGAKELLCIRVLGGTKRRYASVGDTIIATVKQANPGGSAKKGEVVRAVIVRVKKGYTRPDGSMIQFDDNAAVIINQQGNPRGTRIFGPVARELREKQYMKIISLAPEVL</sequence>
<dbReference type="EMBL" id="CP000875">
    <property type="protein sequence ID" value="ABX07554.1"/>
    <property type="molecule type" value="Genomic_DNA"/>
</dbReference>
<dbReference type="SMR" id="A9B421"/>
<dbReference type="FunCoup" id="A9B421">
    <property type="interactions" value="497"/>
</dbReference>
<dbReference type="STRING" id="316274.Haur_4924"/>
<dbReference type="KEGG" id="hau:Haur_4924"/>
<dbReference type="eggNOG" id="COG0093">
    <property type="taxonomic scope" value="Bacteria"/>
</dbReference>
<dbReference type="HOGENOM" id="CLU_095071_2_1_0"/>
<dbReference type="InParanoid" id="A9B421"/>
<dbReference type="Proteomes" id="UP000000787">
    <property type="component" value="Chromosome"/>
</dbReference>
<dbReference type="GO" id="GO:0022625">
    <property type="term" value="C:cytosolic large ribosomal subunit"/>
    <property type="evidence" value="ECO:0007669"/>
    <property type="project" value="TreeGrafter"/>
</dbReference>
<dbReference type="GO" id="GO:0070180">
    <property type="term" value="F:large ribosomal subunit rRNA binding"/>
    <property type="evidence" value="ECO:0007669"/>
    <property type="project" value="TreeGrafter"/>
</dbReference>
<dbReference type="GO" id="GO:0003735">
    <property type="term" value="F:structural constituent of ribosome"/>
    <property type="evidence" value="ECO:0007669"/>
    <property type="project" value="InterPro"/>
</dbReference>
<dbReference type="GO" id="GO:0006412">
    <property type="term" value="P:translation"/>
    <property type="evidence" value="ECO:0007669"/>
    <property type="project" value="UniProtKB-UniRule"/>
</dbReference>
<dbReference type="CDD" id="cd00337">
    <property type="entry name" value="Ribosomal_uL14"/>
    <property type="match status" value="1"/>
</dbReference>
<dbReference type="FunFam" id="2.40.150.20:FF:000001">
    <property type="entry name" value="50S ribosomal protein L14"/>
    <property type="match status" value="1"/>
</dbReference>
<dbReference type="Gene3D" id="2.40.150.20">
    <property type="entry name" value="Ribosomal protein L14"/>
    <property type="match status" value="1"/>
</dbReference>
<dbReference type="HAMAP" id="MF_01367">
    <property type="entry name" value="Ribosomal_uL14"/>
    <property type="match status" value="1"/>
</dbReference>
<dbReference type="InterPro" id="IPR000218">
    <property type="entry name" value="Ribosomal_uL14"/>
</dbReference>
<dbReference type="InterPro" id="IPR005745">
    <property type="entry name" value="Ribosomal_uL14_bac-type"/>
</dbReference>
<dbReference type="InterPro" id="IPR019972">
    <property type="entry name" value="Ribosomal_uL14_CS"/>
</dbReference>
<dbReference type="InterPro" id="IPR036853">
    <property type="entry name" value="Ribosomal_uL14_sf"/>
</dbReference>
<dbReference type="NCBIfam" id="TIGR01067">
    <property type="entry name" value="rplN_bact"/>
    <property type="match status" value="1"/>
</dbReference>
<dbReference type="PANTHER" id="PTHR11761">
    <property type="entry name" value="50S/60S RIBOSOMAL PROTEIN L14/L23"/>
    <property type="match status" value="1"/>
</dbReference>
<dbReference type="PANTHER" id="PTHR11761:SF3">
    <property type="entry name" value="LARGE RIBOSOMAL SUBUNIT PROTEIN UL14M"/>
    <property type="match status" value="1"/>
</dbReference>
<dbReference type="Pfam" id="PF00238">
    <property type="entry name" value="Ribosomal_L14"/>
    <property type="match status" value="1"/>
</dbReference>
<dbReference type="SMART" id="SM01374">
    <property type="entry name" value="Ribosomal_L14"/>
    <property type="match status" value="1"/>
</dbReference>
<dbReference type="SUPFAM" id="SSF50193">
    <property type="entry name" value="Ribosomal protein L14"/>
    <property type="match status" value="1"/>
</dbReference>
<dbReference type="PROSITE" id="PS00049">
    <property type="entry name" value="RIBOSOMAL_L14"/>
    <property type="match status" value="1"/>
</dbReference>
<proteinExistence type="inferred from homology"/>
<protein>
    <recommendedName>
        <fullName evidence="1">Large ribosomal subunit protein uL14</fullName>
    </recommendedName>
    <alternativeName>
        <fullName evidence="2">50S ribosomal protein L14</fullName>
    </alternativeName>
</protein>
<gene>
    <name evidence="1" type="primary">rplN</name>
    <name type="ordered locus">Haur_4924</name>
</gene>
<reference key="1">
    <citation type="journal article" date="2011" name="Stand. Genomic Sci.">
        <title>Complete genome sequence of the filamentous gliding predatory bacterium Herpetosiphon aurantiacus type strain (114-95(T)).</title>
        <authorList>
            <person name="Kiss H."/>
            <person name="Nett M."/>
            <person name="Domin N."/>
            <person name="Martin K."/>
            <person name="Maresca J.A."/>
            <person name="Copeland A."/>
            <person name="Lapidus A."/>
            <person name="Lucas S."/>
            <person name="Berry K.W."/>
            <person name="Glavina Del Rio T."/>
            <person name="Dalin E."/>
            <person name="Tice H."/>
            <person name="Pitluck S."/>
            <person name="Richardson P."/>
            <person name="Bruce D."/>
            <person name="Goodwin L."/>
            <person name="Han C."/>
            <person name="Detter J.C."/>
            <person name="Schmutz J."/>
            <person name="Brettin T."/>
            <person name="Land M."/>
            <person name="Hauser L."/>
            <person name="Kyrpides N.C."/>
            <person name="Ivanova N."/>
            <person name="Goeker M."/>
            <person name="Woyke T."/>
            <person name="Klenk H.P."/>
            <person name="Bryant D.A."/>
        </authorList>
    </citation>
    <scope>NUCLEOTIDE SEQUENCE [LARGE SCALE GENOMIC DNA]</scope>
    <source>
        <strain>ATCC 23779 / DSM 785 / 114-95</strain>
    </source>
</reference>
<comment type="function">
    <text evidence="1">Binds to 23S rRNA. Forms part of two intersubunit bridges in the 70S ribosome.</text>
</comment>
<comment type="subunit">
    <text evidence="1">Part of the 50S ribosomal subunit. Forms a cluster with proteins L3 and L19. In the 70S ribosome, L14 and L19 interact and together make contacts with the 16S rRNA in bridges B5 and B8.</text>
</comment>
<comment type="similarity">
    <text evidence="1">Belongs to the universal ribosomal protein uL14 family.</text>
</comment>
<evidence type="ECO:0000255" key="1">
    <source>
        <dbReference type="HAMAP-Rule" id="MF_01367"/>
    </source>
</evidence>
<evidence type="ECO:0000305" key="2"/>